<feature type="chain" id="PRO_0000154159" description="Pathogenesis-related protein 2">
    <location>
        <begin position="1"/>
        <end position="155"/>
    </location>
</feature>
<accession>P25986</accession>
<proteinExistence type="evidence at transcript level"/>
<evidence type="ECO:0000305" key="1"/>
<name>PR2_PHAVU</name>
<comment type="induction">
    <text>By fungal elicitor.</text>
</comment>
<comment type="similarity">
    <text evidence="1">Belongs to the BetVI family.</text>
</comment>
<dbReference type="EMBL" id="X61364">
    <property type="protein sequence ID" value="CAA43636.1"/>
    <property type="molecule type" value="mRNA"/>
</dbReference>
<dbReference type="EMBL" id="X61365">
    <property type="status" value="NOT_ANNOTATED_CDS"/>
    <property type="molecule type" value="mRNA"/>
</dbReference>
<dbReference type="PIR" id="S11930">
    <property type="entry name" value="SNFB2"/>
</dbReference>
<dbReference type="RefSeq" id="XP_007159109.1">
    <property type="nucleotide sequence ID" value="XM_007159047.1"/>
</dbReference>
<dbReference type="RefSeq" id="XP_007159110.1">
    <property type="nucleotide sequence ID" value="XM_007159048.1"/>
</dbReference>
<dbReference type="RefSeq" id="XP_068469807.1">
    <property type="nucleotide sequence ID" value="XM_068613706.1"/>
</dbReference>
<dbReference type="RefSeq" id="XP_068469808.1">
    <property type="nucleotide sequence ID" value="XM_068613707.1"/>
</dbReference>
<dbReference type="SMR" id="P25986"/>
<dbReference type="EnsemblPlants" id="ESW31103">
    <property type="protein sequence ID" value="ESW31103"/>
    <property type="gene ID" value="PHAVU_002G209400g"/>
</dbReference>
<dbReference type="EnsemblPlants" id="ESW31104">
    <property type="protein sequence ID" value="ESW31104"/>
    <property type="gene ID" value="PHAVU_002G209500g"/>
</dbReference>
<dbReference type="GeneID" id="137811852"/>
<dbReference type="GeneID" id="137811853"/>
<dbReference type="Gramene" id="ESW31103">
    <property type="protein sequence ID" value="ESW31103"/>
    <property type="gene ID" value="PHAVU_002G209400g"/>
</dbReference>
<dbReference type="Gramene" id="ESW31104">
    <property type="protein sequence ID" value="ESW31104"/>
    <property type="gene ID" value="PHAVU_002G209500g"/>
</dbReference>
<dbReference type="eggNOG" id="ENOG502RXTQ">
    <property type="taxonomic scope" value="Eukaryota"/>
</dbReference>
<dbReference type="OrthoDB" id="1858506at2759"/>
<dbReference type="GO" id="GO:0005737">
    <property type="term" value="C:cytoplasm"/>
    <property type="evidence" value="ECO:0007669"/>
    <property type="project" value="TreeGrafter"/>
</dbReference>
<dbReference type="GO" id="GO:0005634">
    <property type="term" value="C:nucleus"/>
    <property type="evidence" value="ECO:0007669"/>
    <property type="project" value="TreeGrafter"/>
</dbReference>
<dbReference type="GO" id="GO:0010427">
    <property type="term" value="F:abscisic acid binding"/>
    <property type="evidence" value="ECO:0007669"/>
    <property type="project" value="InterPro"/>
</dbReference>
<dbReference type="GO" id="GO:0004864">
    <property type="term" value="F:protein phosphatase inhibitor activity"/>
    <property type="evidence" value="ECO:0007669"/>
    <property type="project" value="InterPro"/>
</dbReference>
<dbReference type="GO" id="GO:0038023">
    <property type="term" value="F:signaling receptor activity"/>
    <property type="evidence" value="ECO:0007669"/>
    <property type="project" value="InterPro"/>
</dbReference>
<dbReference type="GO" id="GO:0009738">
    <property type="term" value="P:abscisic acid-activated signaling pathway"/>
    <property type="evidence" value="ECO:0007669"/>
    <property type="project" value="InterPro"/>
</dbReference>
<dbReference type="GO" id="GO:0006952">
    <property type="term" value="P:defense response"/>
    <property type="evidence" value="ECO:0007669"/>
    <property type="project" value="UniProtKB-KW"/>
</dbReference>
<dbReference type="CDD" id="cd07816">
    <property type="entry name" value="Bet_v1-like"/>
    <property type="match status" value="1"/>
</dbReference>
<dbReference type="FunFam" id="3.30.530.20:FF:000007">
    <property type="entry name" value="Major pollen allergen Bet v 1-A"/>
    <property type="match status" value="1"/>
</dbReference>
<dbReference type="Gene3D" id="3.30.530.20">
    <property type="match status" value="1"/>
</dbReference>
<dbReference type="InterPro" id="IPR000916">
    <property type="entry name" value="Bet_v_I/MLP"/>
</dbReference>
<dbReference type="InterPro" id="IPR024949">
    <property type="entry name" value="Bet_v_I_allergen"/>
</dbReference>
<dbReference type="InterPro" id="IPR050279">
    <property type="entry name" value="Plant_def-hormone_signal"/>
</dbReference>
<dbReference type="InterPro" id="IPR023393">
    <property type="entry name" value="START-like_dom_sf"/>
</dbReference>
<dbReference type="PANTHER" id="PTHR31213">
    <property type="entry name" value="OS08G0374000 PROTEIN-RELATED"/>
    <property type="match status" value="1"/>
</dbReference>
<dbReference type="PANTHER" id="PTHR31213:SF55">
    <property type="entry name" value="STRESS-INDUCED PROTEIN SAM22"/>
    <property type="match status" value="1"/>
</dbReference>
<dbReference type="Pfam" id="PF00407">
    <property type="entry name" value="Bet_v_1"/>
    <property type="match status" value="1"/>
</dbReference>
<dbReference type="PRINTS" id="PR00634">
    <property type="entry name" value="BETALLERGEN"/>
</dbReference>
<dbReference type="SUPFAM" id="SSF55961">
    <property type="entry name" value="Bet v1-like"/>
    <property type="match status" value="1"/>
</dbReference>
<dbReference type="PROSITE" id="PS00451">
    <property type="entry name" value="PATHOGENESIS_BETVI"/>
    <property type="match status" value="1"/>
</dbReference>
<organism>
    <name type="scientific">Phaseolus vulgaris</name>
    <name type="common">Kidney bean</name>
    <name type="synonym">French bean</name>
    <dbReference type="NCBI Taxonomy" id="3885"/>
    <lineage>
        <taxon>Eukaryota</taxon>
        <taxon>Viridiplantae</taxon>
        <taxon>Streptophyta</taxon>
        <taxon>Embryophyta</taxon>
        <taxon>Tracheophyta</taxon>
        <taxon>Spermatophyta</taxon>
        <taxon>Magnoliopsida</taxon>
        <taxon>eudicotyledons</taxon>
        <taxon>Gunneridae</taxon>
        <taxon>Pentapetalae</taxon>
        <taxon>rosids</taxon>
        <taxon>fabids</taxon>
        <taxon>Fabales</taxon>
        <taxon>Fabaceae</taxon>
        <taxon>Papilionoideae</taxon>
        <taxon>50 kb inversion clade</taxon>
        <taxon>NPAAA clade</taxon>
        <taxon>indigoferoid/millettioid clade</taxon>
        <taxon>Phaseoleae</taxon>
        <taxon>Phaseolus</taxon>
    </lineage>
</organism>
<keyword id="KW-0568">Pathogenesis-related protein</keyword>
<keyword id="KW-0611">Plant defense</keyword>
<reference key="1">
    <citation type="journal article" date="1990" name="Mol. Gen. Genet.">
        <title>Bean pathogenesis-related (PR) proteins deduced from elicitor-induced transcripts are members of a ubiquitous new class of conserved PR proteins including pollen allergens.</title>
        <authorList>
            <person name="Walter M.H."/>
            <person name="Liu J.W."/>
            <person name="Grand C."/>
            <person name="Lamb C.J."/>
            <person name="Hess D."/>
        </authorList>
    </citation>
    <scope>NUCLEOTIDE SEQUENCE [MRNA]</scope>
    <source>
        <strain>cv. Canadian Wonder</strain>
    </source>
</reference>
<sequence length="155" mass="16403">MAVFTFEDQTTSPVAPATLYKALVKDADTIVPKAVDSFKSVEIVEGNGGPGTIKKISFVEDGETKFVLHKIEEIDEANLGYSYSIVGGAALPDTAEKISIDSKLSDGPNGGSVVKLSIKYHSKGDAPPNEDELKAGKAKSDALFKVIEAYLLANP</sequence>
<protein>
    <recommendedName>
        <fullName>Pathogenesis-related protein 2</fullName>
    </recommendedName>
    <alternativeName>
        <fullName>PvPR2</fullName>
    </alternativeName>
</protein>